<reference key="1">
    <citation type="journal article" date="1993" name="Nucleic Acids Res.">
        <title>African swine fever virus encodes two genes which share significant homology with the two largest subunits of DNA-dependent RNA polymerases.</title>
        <authorList>
            <person name="Yanez R.J."/>
            <person name="Boursnell M.E."/>
            <person name="Nogal M.L."/>
            <person name="Yuste L."/>
            <person name="Vinuela E."/>
        </authorList>
    </citation>
    <scope>NUCLEOTIDE SEQUENCE [GENOMIC DNA]</scope>
</reference>
<reference key="2">
    <citation type="journal article" date="1995" name="Virology">
        <title>Analysis of the complete nucleotide sequence of African swine fever virus.</title>
        <authorList>
            <person name="Yanez R.J."/>
            <person name="Rodriguez J.M."/>
            <person name="Nogal M.L."/>
            <person name="Yuste L."/>
            <person name="Enriquez C."/>
            <person name="Rodriguez J.F."/>
            <person name="Vinuela E."/>
        </authorList>
    </citation>
    <scope>NUCLEOTIDE SEQUENCE [LARGE SCALE GENOMIC DNA]</scope>
</reference>
<reference key="3">
    <citation type="journal article" date="2018" name="J. Virol.">
        <title>A Proteomic Atlas of the African Swine Fever Virus Particle.</title>
        <authorList>
            <person name="Alejo A."/>
            <person name="Matamoros T."/>
            <person name="Guerra M."/>
            <person name="Andres G."/>
        </authorList>
    </citation>
    <scope>SUBCELLULAR LOCATION</scope>
</reference>
<reference key="4">
    <citation type="journal article" date="2020" name="J. Virol.">
        <title>The African Swine Fever Virus Transcriptome.</title>
        <authorList>
            <person name="Cackett G."/>
            <person name="Matelska D."/>
            <person name="Sykora M."/>
            <person name="Portugal R."/>
            <person name="Malecki M."/>
            <person name="Baehler J."/>
            <person name="Dixon L."/>
            <person name="Werner F."/>
        </authorList>
    </citation>
    <scope>INDUCTION</scope>
</reference>
<gene>
    <name type="ordered locus">Ba71V-054</name>
    <name type="ORF">EP84R</name>
</gene>
<sequence>MPYSRDITKFITATEPEVGLPLLALQHSKSVIGVILLVISLLFIFIGIIILSVSSGHTTAASIFIVLSLILGGGGFFLIYKDNS</sequence>
<name>VF84_ASFB7</name>
<feature type="chain" id="PRO_0000373744" description="Transmembrane protein EP84R">
    <location>
        <begin position="1"/>
        <end position="84"/>
    </location>
</feature>
<feature type="transmembrane region" description="Helical" evidence="1">
    <location>
        <begin position="31"/>
        <end position="51"/>
    </location>
</feature>
<feature type="transmembrane region" description="Helical" evidence="1">
    <location>
        <begin position="60"/>
        <end position="80"/>
    </location>
</feature>
<comment type="subcellular location">
    <subcellularLocation>
        <location evidence="4">Virion membrane</location>
    </subcellularLocation>
</comment>
<comment type="induction">
    <text evidence="2">Expressed in the late phase of the viral replicative cycle.</text>
</comment>
<comment type="similarity">
    <text evidence="3">Belongs to the asfivirus EP84R family.</text>
</comment>
<evidence type="ECO:0000255" key="1"/>
<evidence type="ECO:0000269" key="2">
    <source>
    </source>
</evidence>
<evidence type="ECO:0000305" key="3"/>
<evidence type="ECO:0000305" key="4">
    <source>
    </source>
</evidence>
<proteinExistence type="evidence at transcript level"/>
<organismHost>
    <name type="scientific">Ornithodoros</name>
    <name type="common">relapsing fever ticks</name>
    <dbReference type="NCBI Taxonomy" id="6937"/>
</organismHost>
<organismHost>
    <name type="scientific">Sus scrofa</name>
    <name type="common">Pig</name>
    <dbReference type="NCBI Taxonomy" id="9823"/>
</organismHost>
<keyword id="KW-0426">Late protein</keyword>
<keyword id="KW-0472">Membrane</keyword>
<keyword id="KW-1185">Reference proteome</keyword>
<keyword id="KW-0812">Transmembrane</keyword>
<keyword id="KW-1133">Transmembrane helix</keyword>
<keyword id="KW-0946">Virion</keyword>
<accession>Q07383</accession>
<dbReference type="EMBL" id="Z21490">
    <property type="protein sequence ID" value="CAA79701.1"/>
    <property type="molecule type" value="Genomic_DNA"/>
</dbReference>
<dbReference type="EMBL" id="U18466">
    <property type="protein sequence ID" value="AAA65284.1"/>
    <property type="molecule type" value="Genomic_DNA"/>
</dbReference>
<dbReference type="PIR" id="S33999">
    <property type="entry name" value="S33999"/>
</dbReference>
<dbReference type="RefSeq" id="NP_042748.1">
    <property type="nucleotide sequence ID" value="NC_001659.2"/>
</dbReference>
<dbReference type="SMR" id="Q07383"/>
<dbReference type="GeneID" id="22220436"/>
<dbReference type="KEGG" id="vg:22220436"/>
<dbReference type="Proteomes" id="UP000000624">
    <property type="component" value="Segment"/>
</dbReference>
<dbReference type="GO" id="GO:0016020">
    <property type="term" value="C:membrane"/>
    <property type="evidence" value="ECO:0007669"/>
    <property type="project" value="UniProtKB-KW"/>
</dbReference>
<dbReference type="GO" id="GO:0055036">
    <property type="term" value="C:virion membrane"/>
    <property type="evidence" value="ECO:0007669"/>
    <property type="project" value="UniProtKB-SubCell"/>
</dbReference>
<organism>
    <name type="scientific">African swine fever virus (strain Badajoz 1971 Vero-adapted)</name>
    <name type="common">Ba71V</name>
    <name type="synonym">ASFV</name>
    <dbReference type="NCBI Taxonomy" id="10498"/>
    <lineage>
        <taxon>Viruses</taxon>
        <taxon>Varidnaviria</taxon>
        <taxon>Bamfordvirae</taxon>
        <taxon>Nucleocytoviricota</taxon>
        <taxon>Pokkesviricetes</taxon>
        <taxon>Asfuvirales</taxon>
        <taxon>Asfarviridae</taxon>
        <taxon>Asfivirus</taxon>
        <taxon>African swine fever virus</taxon>
    </lineage>
</organism>
<protein>
    <recommendedName>
        <fullName>Transmembrane protein EP84R</fullName>
        <shortName>pEP84R</shortName>
    </recommendedName>
</protein>